<protein>
    <recommendedName>
        <fullName evidence="1">UPF0102 protein YraN</fullName>
    </recommendedName>
</protein>
<proteinExistence type="inferred from homology"/>
<organism>
    <name type="scientific">Escherichia coli (strain ATCC 8739 / DSM 1576 / NBRC 3972 / NCIMB 8545 / WDCM 00012 / Crooks)</name>
    <dbReference type="NCBI Taxonomy" id="481805"/>
    <lineage>
        <taxon>Bacteria</taxon>
        <taxon>Pseudomonadati</taxon>
        <taxon>Pseudomonadota</taxon>
        <taxon>Gammaproteobacteria</taxon>
        <taxon>Enterobacterales</taxon>
        <taxon>Enterobacteriaceae</taxon>
        <taxon>Escherichia</taxon>
    </lineage>
</organism>
<name>YRAN_ECOLC</name>
<comment type="similarity">
    <text evidence="1">Belongs to the UPF0102 family.</text>
</comment>
<reference key="1">
    <citation type="submission" date="2008-02" db="EMBL/GenBank/DDBJ databases">
        <title>Complete sequence of Escherichia coli C str. ATCC 8739.</title>
        <authorList>
            <person name="Copeland A."/>
            <person name="Lucas S."/>
            <person name="Lapidus A."/>
            <person name="Glavina del Rio T."/>
            <person name="Dalin E."/>
            <person name="Tice H."/>
            <person name="Bruce D."/>
            <person name="Goodwin L."/>
            <person name="Pitluck S."/>
            <person name="Kiss H."/>
            <person name="Brettin T."/>
            <person name="Detter J.C."/>
            <person name="Han C."/>
            <person name="Kuske C.R."/>
            <person name="Schmutz J."/>
            <person name="Larimer F."/>
            <person name="Land M."/>
            <person name="Hauser L."/>
            <person name="Kyrpides N."/>
            <person name="Mikhailova N."/>
            <person name="Ingram L."/>
            <person name="Richardson P."/>
        </authorList>
    </citation>
    <scope>NUCLEOTIDE SEQUENCE [LARGE SCALE GENOMIC DNA]</scope>
    <source>
        <strain>ATCC 8739 / DSM 1576 / NBRC 3972 / NCIMB 8545 / WDCM 00012 / Crooks</strain>
    </source>
</reference>
<sequence>MATVPTRSGSPRQLTTKQTGDAWEAQARRWLEGKGLRFIAANVNERGGEIDLIMREGRTTIFVEVRYRRSALYGGAAASVTRSKQHKLLQTARLWLARHNGSFDTVDCRFDVVAFTGNEVEWIKDAFNDHS</sequence>
<gene>
    <name evidence="1" type="primary">yraN</name>
    <name type="ordered locus">EcolC_0550</name>
</gene>
<evidence type="ECO:0000255" key="1">
    <source>
        <dbReference type="HAMAP-Rule" id="MF_00048"/>
    </source>
</evidence>
<evidence type="ECO:0000256" key="2">
    <source>
        <dbReference type="SAM" id="MobiDB-lite"/>
    </source>
</evidence>
<accession>B1IQX3</accession>
<dbReference type="EMBL" id="CP000946">
    <property type="protein sequence ID" value="ACA76227.1"/>
    <property type="molecule type" value="Genomic_DNA"/>
</dbReference>
<dbReference type="RefSeq" id="WP_000246830.1">
    <property type="nucleotide sequence ID" value="NZ_MTFT01000027.1"/>
</dbReference>
<dbReference type="SMR" id="B1IQX3"/>
<dbReference type="KEGG" id="ecl:EcolC_0550"/>
<dbReference type="HOGENOM" id="CLU_115353_1_0_6"/>
<dbReference type="GO" id="GO:0003676">
    <property type="term" value="F:nucleic acid binding"/>
    <property type="evidence" value="ECO:0007669"/>
    <property type="project" value="InterPro"/>
</dbReference>
<dbReference type="CDD" id="cd20736">
    <property type="entry name" value="PoNe_Nuclease"/>
    <property type="match status" value="1"/>
</dbReference>
<dbReference type="Gene3D" id="3.40.1350.10">
    <property type="match status" value="1"/>
</dbReference>
<dbReference type="HAMAP" id="MF_00048">
    <property type="entry name" value="UPF0102"/>
    <property type="match status" value="1"/>
</dbReference>
<dbReference type="InterPro" id="IPR011335">
    <property type="entry name" value="Restrct_endonuc-II-like"/>
</dbReference>
<dbReference type="InterPro" id="IPR011856">
    <property type="entry name" value="tRNA_endonuc-like_dom_sf"/>
</dbReference>
<dbReference type="InterPro" id="IPR003509">
    <property type="entry name" value="UPF0102_YraN-like"/>
</dbReference>
<dbReference type="NCBIfam" id="NF009150">
    <property type="entry name" value="PRK12497.1-3"/>
    <property type="match status" value="1"/>
</dbReference>
<dbReference type="NCBIfam" id="TIGR00252">
    <property type="entry name" value="YraN family protein"/>
    <property type="match status" value="1"/>
</dbReference>
<dbReference type="PANTHER" id="PTHR34039">
    <property type="entry name" value="UPF0102 PROTEIN YRAN"/>
    <property type="match status" value="1"/>
</dbReference>
<dbReference type="PANTHER" id="PTHR34039:SF1">
    <property type="entry name" value="UPF0102 PROTEIN YRAN"/>
    <property type="match status" value="1"/>
</dbReference>
<dbReference type="Pfam" id="PF02021">
    <property type="entry name" value="UPF0102"/>
    <property type="match status" value="1"/>
</dbReference>
<dbReference type="SUPFAM" id="SSF52980">
    <property type="entry name" value="Restriction endonuclease-like"/>
    <property type="match status" value="1"/>
</dbReference>
<feature type="chain" id="PRO_1000074813" description="UPF0102 protein YraN">
    <location>
        <begin position="1"/>
        <end position="131"/>
    </location>
</feature>
<feature type="region of interest" description="Disordered" evidence="2">
    <location>
        <begin position="1"/>
        <end position="21"/>
    </location>
</feature>
<feature type="compositionally biased region" description="Polar residues" evidence="2">
    <location>
        <begin position="1"/>
        <end position="19"/>
    </location>
</feature>